<evidence type="ECO:0000255" key="1">
    <source>
        <dbReference type="HAMAP-Rule" id="MF_00391"/>
    </source>
</evidence>
<evidence type="ECO:0000305" key="2"/>
<sequence length="46" mass="5465">MKRTYQPSNIKRKRTHGFRARMATRGGRLVLKRRRAKGRKRLTPTA</sequence>
<feature type="chain" id="PRO_1000013352" description="Large ribosomal subunit protein bL34">
    <location>
        <begin position="1"/>
        <end position="46"/>
    </location>
</feature>
<dbReference type="EMBL" id="CP000544">
    <property type="protein sequence ID" value="ABM62003.1"/>
    <property type="molecule type" value="Genomic_DNA"/>
</dbReference>
<dbReference type="RefSeq" id="WP_011814026.1">
    <property type="nucleotide sequence ID" value="NC_008789.1"/>
</dbReference>
<dbReference type="SMR" id="A1WWE1"/>
<dbReference type="STRING" id="349124.Hhal_1228"/>
<dbReference type="KEGG" id="hha:Hhal_1228"/>
<dbReference type="eggNOG" id="COG0230">
    <property type="taxonomic scope" value="Bacteria"/>
</dbReference>
<dbReference type="HOGENOM" id="CLU_129938_2_0_6"/>
<dbReference type="Proteomes" id="UP000000647">
    <property type="component" value="Chromosome"/>
</dbReference>
<dbReference type="GO" id="GO:1990904">
    <property type="term" value="C:ribonucleoprotein complex"/>
    <property type="evidence" value="ECO:0007669"/>
    <property type="project" value="UniProtKB-KW"/>
</dbReference>
<dbReference type="GO" id="GO:0005840">
    <property type="term" value="C:ribosome"/>
    <property type="evidence" value="ECO:0007669"/>
    <property type="project" value="UniProtKB-KW"/>
</dbReference>
<dbReference type="GO" id="GO:0003735">
    <property type="term" value="F:structural constituent of ribosome"/>
    <property type="evidence" value="ECO:0007669"/>
    <property type="project" value="InterPro"/>
</dbReference>
<dbReference type="GO" id="GO:0006412">
    <property type="term" value="P:translation"/>
    <property type="evidence" value="ECO:0007669"/>
    <property type="project" value="UniProtKB-UniRule"/>
</dbReference>
<dbReference type="FunFam" id="1.10.287.3980:FF:000001">
    <property type="entry name" value="Mitochondrial ribosomal protein L34"/>
    <property type="match status" value="1"/>
</dbReference>
<dbReference type="Gene3D" id="1.10.287.3980">
    <property type="match status" value="1"/>
</dbReference>
<dbReference type="HAMAP" id="MF_00391">
    <property type="entry name" value="Ribosomal_bL34"/>
    <property type="match status" value="1"/>
</dbReference>
<dbReference type="InterPro" id="IPR000271">
    <property type="entry name" value="Ribosomal_bL34"/>
</dbReference>
<dbReference type="InterPro" id="IPR020939">
    <property type="entry name" value="Ribosomal_bL34_CS"/>
</dbReference>
<dbReference type="NCBIfam" id="TIGR01030">
    <property type="entry name" value="rpmH_bact"/>
    <property type="match status" value="1"/>
</dbReference>
<dbReference type="PANTHER" id="PTHR14503:SF4">
    <property type="entry name" value="LARGE RIBOSOMAL SUBUNIT PROTEIN BL34M"/>
    <property type="match status" value="1"/>
</dbReference>
<dbReference type="PANTHER" id="PTHR14503">
    <property type="entry name" value="MITOCHONDRIAL RIBOSOMAL PROTEIN 34 FAMILY MEMBER"/>
    <property type="match status" value="1"/>
</dbReference>
<dbReference type="Pfam" id="PF00468">
    <property type="entry name" value="Ribosomal_L34"/>
    <property type="match status" value="1"/>
</dbReference>
<dbReference type="PROSITE" id="PS00784">
    <property type="entry name" value="RIBOSOMAL_L34"/>
    <property type="match status" value="1"/>
</dbReference>
<proteinExistence type="inferred from homology"/>
<gene>
    <name evidence="1" type="primary">rpmH</name>
    <name type="ordered locus">Hhal_1228</name>
</gene>
<keyword id="KW-1185">Reference proteome</keyword>
<keyword id="KW-0687">Ribonucleoprotein</keyword>
<keyword id="KW-0689">Ribosomal protein</keyword>
<protein>
    <recommendedName>
        <fullName evidence="1">Large ribosomal subunit protein bL34</fullName>
    </recommendedName>
    <alternativeName>
        <fullName evidence="2">50S ribosomal protein L34</fullName>
    </alternativeName>
</protein>
<comment type="similarity">
    <text evidence="1">Belongs to the bacterial ribosomal protein bL34 family.</text>
</comment>
<accession>A1WWE1</accession>
<organism>
    <name type="scientific">Halorhodospira halophila (strain DSM 244 / SL1)</name>
    <name type="common">Ectothiorhodospira halophila (strain DSM 244 / SL1)</name>
    <dbReference type="NCBI Taxonomy" id="349124"/>
    <lineage>
        <taxon>Bacteria</taxon>
        <taxon>Pseudomonadati</taxon>
        <taxon>Pseudomonadota</taxon>
        <taxon>Gammaproteobacteria</taxon>
        <taxon>Chromatiales</taxon>
        <taxon>Ectothiorhodospiraceae</taxon>
        <taxon>Halorhodospira</taxon>
    </lineage>
</organism>
<reference key="1">
    <citation type="submission" date="2006-12" db="EMBL/GenBank/DDBJ databases">
        <title>Complete sequence of Halorhodospira halophila SL1.</title>
        <authorList>
            <consortium name="US DOE Joint Genome Institute"/>
            <person name="Copeland A."/>
            <person name="Lucas S."/>
            <person name="Lapidus A."/>
            <person name="Barry K."/>
            <person name="Detter J.C."/>
            <person name="Glavina del Rio T."/>
            <person name="Hammon N."/>
            <person name="Israni S."/>
            <person name="Dalin E."/>
            <person name="Tice H."/>
            <person name="Pitluck S."/>
            <person name="Saunders E."/>
            <person name="Brettin T."/>
            <person name="Bruce D."/>
            <person name="Han C."/>
            <person name="Tapia R."/>
            <person name="Schmutz J."/>
            <person name="Larimer F."/>
            <person name="Land M."/>
            <person name="Hauser L."/>
            <person name="Kyrpides N."/>
            <person name="Mikhailova N."/>
            <person name="Hoff W."/>
            <person name="Richardson P."/>
        </authorList>
    </citation>
    <scope>NUCLEOTIDE SEQUENCE [LARGE SCALE GENOMIC DNA]</scope>
    <source>
        <strain>DSM 244 / SL1</strain>
    </source>
</reference>
<name>RL34_HALHL</name>